<comment type="function">
    <text evidence="1">Plays an important role in the de novo pathway of purine nucleotide biosynthesis. Catalyzes the first committed step in the biosynthesis of AMP from IMP.</text>
</comment>
<comment type="catalytic activity">
    <reaction evidence="1">
        <text>IMP + L-aspartate + GTP = N(6)-(1,2-dicarboxyethyl)-AMP + GDP + phosphate + 2 H(+)</text>
        <dbReference type="Rhea" id="RHEA:15753"/>
        <dbReference type="ChEBI" id="CHEBI:15378"/>
        <dbReference type="ChEBI" id="CHEBI:29991"/>
        <dbReference type="ChEBI" id="CHEBI:37565"/>
        <dbReference type="ChEBI" id="CHEBI:43474"/>
        <dbReference type="ChEBI" id="CHEBI:57567"/>
        <dbReference type="ChEBI" id="CHEBI:58053"/>
        <dbReference type="ChEBI" id="CHEBI:58189"/>
        <dbReference type="EC" id="6.3.4.4"/>
    </reaction>
</comment>
<comment type="cofactor">
    <cofactor evidence="1">
        <name>Mg(2+)</name>
        <dbReference type="ChEBI" id="CHEBI:18420"/>
    </cofactor>
    <text evidence="1">Binds 1 Mg(2+) ion per subunit.</text>
</comment>
<comment type="pathway">
    <text evidence="1">Purine metabolism; AMP biosynthesis via de novo pathway; AMP from IMP: step 1/2.</text>
</comment>
<comment type="subunit">
    <text evidence="1">Homodimer.</text>
</comment>
<comment type="subcellular location">
    <subcellularLocation>
        <location evidence="1">Cytoplasm</location>
    </subcellularLocation>
</comment>
<comment type="similarity">
    <text evidence="1">Belongs to the adenylosuccinate synthetase family.</text>
</comment>
<sequence length="427" mass="48118">MAIYAVVGTQWGDEGKGKIIDFLSSKIDYVVRFNGGNNAGHTIVVNDKKFIFNLLPSGVLQGAKCILGPSVVIDPLILIQELEVLKNNNIKTEIFISDKAHIIMPYHIKFDELSEQKKGIHKIGTTKKGIGPCYADKINRIGIRTIDLLNTEIFANKLKTNLEEKNQIIEKIYNDKPLDYDDILNTYKKYIEILKSLITNTEKILHHAINSEKHILIEGAQGTMLDIEHGTFPFVTSSNTLITAAAGCGIPISKIKQKIGIIKAFSSRVGSGPFVTEISNSIGDIIREKGQEYGSTTKRPRRIGWLDLLTIKKAIALNELNHLALTKLDILNNIESLKICTAYEFQGKIYDYIPTSCETIEKVRPIYKVFKGFKEDISNIKNYDDLPIEAREYIEFIEKEVGIQISILSVGSEREKTIFRNQEWSNI</sequence>
<proteinExistence type="inferred from homology"/>
<protein>
    <recommendedName>
        <fullName evidence="1">Adenylosuccinate synthetase</fullName>
        <shortName evidence="1">AMPSase</shortName>
        <shortName evidence="1">AdSS</shortName>
        <ecNumber evidence="1">6.3.4.4</ecNumber>
    </recommendedName>
    <alternativeName>
        <fullName evidence="1">IMP--aspartate ligase</fullName>
    </alternativeName>
</protein>
<keyword id="KW-0963">Cytoplasm</keyword>
<keyword id="KW-0342">GTP-binding</keyword>
<keyword id="KW-0436">Ligase</keyword>
<keyword id="KW-0460">Magnesium</keyword>
<keyword id="KW-0479">Metal-binding</keyword>
<keyword id="KW-0547">Nucleotide-binding</keyword>
<keyword id="KW-0658">Purine biosynthesis</keyword>
<reference key="1">
    <citation type="journal article" date="2008" name="PLoS Genet.">
        <title>The genome of Borrelia recurrentis, the agent of deadly louse-borne relapsing fever, is a degraded subset of tick-borne Borrelia duttonii.</title>
        <authorList>
            <person name="Lescot M."/>
            <person name="Audic S."/>
            <person name="Robert C."/>
            <person name="Nguyen T.T."/>
            <person name="Blanc G."/>
            <person name="Cutler S.J."/>
            <person name="Wincker P."/>
            <person name="Couloux A."/>
            <person name="Claverie J.-M."/>
            <person name="Raoult D."/>
            <person name="Drancourt M."/>
        </authorList>
    </citation>
    <scope>NUCLEOTIDE SEQUENCE [LARGE SCALE GENOMIC DNA]</scope>
    <source>
        <strain>Ly</strain>
    </source>
</reference>
<gene>
    <name evidence="1" type="primary">purA</name>
    <name type="ordered locus">BDU_419</name>
</gene>
<evidence type="ECO:0000255" key="1">
    <source>
        <dbReference type="HAMAP-Rule" id="MF_00011"/>
    </source>
</evidence>
<feature type="chain" id="PRO_1000089271" description="Adenylosuccinate synthetase">
    <location>
        <begin position="1"/>
        <end position="427"/>
    </location>
</feature>
<feature type="active site" description="Proton acceptor" evidence="1">
    <location>
        <position position="13"/>
    </location>
</feature>
<feature type="active site" description="Proton donor" evidence="1">
    <location>
        <position position="41"/>
    </location>
</feature>
<feature type="binding site" evidence="1">
    <location>
        <begin position="12"/>
        <end position="18"/>
    </location>
    <ligand>
        <name>GTP</name>
        <dbReference type="ChEBI" id="CHEBI:37565"/>
    </ligand>
</feature>
<feature type="binding site" description="in other chain" evidence="1">
    <location>
        <begin position="13"/>
        <end position="16"/>
    </location>
    <ligand>
        <name>IMP</name>
        <dbReference type="ChEBI" id="CHEBI:58053"/>
        <note>ligand shared between dimeric partners</note>
    </ligand>
</feature>
<feature type="binding site" evidence="1">
    <location>
        <position position="13"/>
    </location>
    <ligand>
        <name>Mg(2+)</name>
        <dbReference type="ChEBI" id="CHEBI:18420"/>
    </ligand>
</feature>
<feature type="binding site" description="in other chain" evidence="1">
    <location>
        <begin position="38"/>
        <end position="41"/>
    </location>
    <ligand>
        <name>IMP</name>
        <dbReference type="ChEBI" id="CHEBI:58053"/>
        <note>ligand shared between dimeric partners</note>
    </ligand>
</feature>
<feature type="binding site" evidence="1">
    <location>
        <begin position="40"/>
        <end position="42"/>
    </location>
    <ligand>
        <name>GTP</name>
        <dbReference type="ChEBI" id="CHEBI:37565"/>
    </ligand>
</feature>
<feature type="binding site" evidence="1">
    <location>
        <position position="40"/>
    </location>
    <ligand>
        <name>Mg(2+)</name>
        <dbReference type="ChEBI" id="CHEBI:18420"/>
    </ligand>
</feature>
<feature type="binding site" description="in other chain" evidence="1">
    <location>
        <position position="126"/>
    </location>
    <ligand>
        <name>IMP</name>
        <dbReference type="ChEBI" id="CHEBI:58053"/>
        <note>ligand shared between dimeric partners</note>
    </ligand>
</feature>
<feature type="binding site" evidence="1">
    <location>
        <position position="140"/>
    </location>
    <ligand>
        <name>IMP</name>
        <dbReference type="ChEBI" id="CHEBI:58053"/>
        <note>ligand shared between dimeric partners</note>
    </ligand>
</feature>
<feature type="binding site" description="in other chain" evidence="1">
    <location>
        <position position="221"/>
    </location>
    <ligand>
        <name>IMP</name>
        <dbReference type="ChEBI" id="CHEBI:58053"/>
        <note>ligand shared between dimeric partners</note>
    </ligand>
</feature>
<feature type="binding site" description="in other chain" evidence="1">
    <location>
        <position position="236"/>
    </location>
    <ligand>
        <name>IMP</name>
        <dbReference type="ChEBI" id="CHEBI:58053"/>
        <note>ligand shared between dimeric partners</note>
    </ligand>
</feature>
<feature type="binding site" evidence="1">
    <location>
        <begin position="295"/>
        <end position="301"/>
    </location>
    <ligand>
        <name>substrate</name>
    </ligand>
</feature>
<feature type="binding site" description="in other chain" evidence="1">
    <location>
        <position position="299"/>
    </location>
    <ligand>
        <name>IMP</name>
        <dbReference type="ChEBI" id="CHEBI:58053"/>
        <note>ligand shared between dimeric partners</note>
    </ligand>
</feature>
<feature type="binding site" evidence="1">
    <location>
        <position position="301"/>
    </location>
    <ligand>
        <name>GTP</name>
        <dbReference type="ChEBI" id="CHEBI:37565"/>
    </ligand>
</feature>
<feature type="binding site" evidence="1">
    <location>
        <begin position="327"/>
        <end position="329"/>
    </location>
    <ligand>
        <name>GTP</name>
        <dbReference type="ChEBI" id="CHEBI:37565"/>
    </ligand>
</feature>
<feature type="binding site" evidence="1">
    <location>
        <begin position="409"/>
        <end position="411"/>
    </location>
    <ligand>
        <name>GTP</name>
        <dbReference type="ChEBI" id="CHEBI:37565"/>
    </ligand>
</feature>
<organism>
    <name type="scientific">Borrelia duttonii (strain Ly)</name>
    <dbReference type="NCBI Taxonomy" id="412419"/>
    <lineage>
        <taxon>Bacteria</taxon>
        <taxon>Pseudomonadati</taxon>
        <taxon>Spirochaetota</taxon>
        <taxon>Spirochaetia</taxon>
        <taxon>Spirochaetales</taxon>
        <taxon>Borreliaceae</taxon>
        <taxon>Borrelia</taxon>
    </lineage>
</organism>
<name>PURA_BORDL</name>
<dbReference type="EC" id="6.3.4.4" evidence="1"/>
<dbReference type="EMBL" id="CP000976">
    <property type="protein sequence ID" value="ACH93367.1"/>
    <property type="molecule type" value="Genomic_DNA"/>
</dbReference>
<dbReference type="RefSeq" id="WP_012538178.1">
    <property type="nucleotide sequence ID" value="NC_011229.1"/>
</dbReference>
<dbReference type="SMR" id="B5RLY1"/>
<dbReference type="STRING" id="412419.BDU_419"/>
<dbReference type="KEGG" id="bdu:BDU_419"/>
<dbReference type="eggNOG" id="COG0104">
    <property type="taxonomic scope" value="Bacteria"/>
</dbReference>
<dbReference type="HOGENOM" id="CLU_029848_0_0_12"/>
<dbReference type="OrthoDB" id="9807553at2"/>
<dbReference type="UniPathway" id="UPA00075">
    <property type="reaction ID" value="UER00335"/>
</dbReference>
<dbReference type="Proteomes" id="UP000000611">
    <property type="component" value="Chromosome"/>
</dbReference>
<dbReference type="GO" id="GO:0005737">
    <property type="term" value="C:cytoplasm"/>
    <property type="evidence" value="ECO:0007669"/>
    <property type="project" value="UniProtKB-SubCell"/>
</dbReference>
<dbReference type="GO" id="GO:0004019">
    <property type="term" value="F:adenylosuccinate synthase activity"/>
    <property type="evidence" value="ECO:0007669"/>
    <property type="project" value="UniProtKB-UniRule"/>
</dbReference>
<dbReference type="GO" id="GO:0005525">
    <property type="term" value="F:GTP binding"/>
    <property type="evidence" value="ECO:0007669"/>
    <property type="project" value="UniProtKB-UniRule"/>
</dbReference>
<dbReference type="GO" id="GO:0000287">
    <property type="term" value="F:magnesium ion binding"/>
    <property type="evidence" value="ECO:0007669"/>
    <property type="project" value="UniProtKB-UniRule"/>
</dbReference>
<dbReference type="GO" id="GO:0044208">
    <property type="term" value="P:'de novo' AMP biosynthetic process"/>
    <property type="evidence" value="ECO:0007669"/>
    <property type="project" value="UniProtKB-UniRule"/>
</dbReference>
<dbReference type="GO" id="GO:0046040">
    <property type="term" value="P:IMP metabolic process"/>
    <property type="evidence" value="ECO:0007669"/>
    <property type="project" value="TreeGrafter"/>
</dbReference>
<dbReference type="CDD" id="cd03108">
    <property type="entry name" value="AdSS"/>
    <property type="match status" value="1"/>
</dbReference>
<dbReference type="FunFam" id="1.10.300.10:FF:000001">
    <property type="entry name" value="Adenylosuccinate synthetase"/>
    <property type="match status" value="1"/>
</dbReference>
<dbReference type="FunFam" id="3.90.170.10:FF:000001">
    <property type="entry name" value="Adenylosuccinate synthetase"/>
    <property type="match status" value="1"/>
</dbReference>
<dbReference type="Gene3D" id="3.40.440.10">
    <property type="entry name" value="Adenylosuccinate Synthetase, subunit A, domain 1"/>
    <property type="match status" value="1"/>
</dbReference>
<dbReference type="Gene3D" id="1.10.300.10">
    <property type="entry name" value="Adenylosuccinate Synthetase, subunit A, domain 2"/>
    <property type="match status" value="1"/>
</dbReference>
<dbReference type="Gene3D" id="3.90.170.10">
    <property type="entry name" value="Adenylosuccinate Synthetase, subunit A, domain 3"/>
    <property type="match status" value="1"/>
</dbReference>
<dbReference type="HAMAP" id="MF_00011">
    <property type="entry name" value="Adenylosucc_synth"/>
    <property type="match status" value="1"/>
</dbReference>
<dbReference type="InterPro" id="IPR018220">
    <property type="entry name" value="Adenylosuccin_syn_GTP-bd"/>
</dbReference>
<dbReference type="InterPro" id="IPR033128">
    <property type="entry name" value="Adenylosuccin_syn_Lys_AS"/>
</dbReference>
<dbReference type="InterPro" id="IPR042109">
    <property type="entry name" value="Adenylosuccinate_synth_dom1"/>
</dbReference>
<dbReference type="InterPro" id="IPR042110">
    <property type="entry name" value="Adenylosuccinate_synth_dom2"/>
</dbReference>
<dbReference type="InterPro" id="IPR042111">
    <property type="entry name" value="Adenylosuccinate_synth_dom3"/>
</dbReference>
<dbReference type="InterPro" id="IPR001114">
    <property type="entry name" value="Adenylosuccinate_synthetase"/>
</dbReference>
<dbReference type="InterPro" id="IPR027417">
    <property type="entry name" value="P-loop_NTPase"/>
</dbReference>
<dbReference type="NCBIfam" id="NF002223">
    <property type="entry name" value="PRK01117.1"/>
    <property type="match status" value="1"/>
</dbReference>
<dbReference type="NCBIfam" id="TIGR00184">
    <property type="entry name" value="purA"/>
    <property type="match status" value="1"/>
</dbReference>
<dbReference type="PANTHER" id="PTHR11846">
    <property type="entry name" value="ADENYLOSUCCINATE SYNTHETASE"/>
    <property type="match status" value="1"/>
</dbReference>
<dbReference type="PANTHER" id="PTHR11846:SF0">
    <property type="entry name" value="ADENYLOSUCCINATE SYNTHETASE"/>
    <property type="match status" value="1"/>
</dbReference>
<dbReference type="Pfam" id="PF00709">
    <property type="entry name" value="Adenylsucc_synt"/>
    <property type="match status" value="1"/>
</dbReference>
<dbReference type="SMART" id="SM00788">
    <property type="entry name" value="Adenylsucc_synt"/>
    <property type="match status" value="1"/>
</dbReference>
<dbReference type="SUPFAM" id="SSF52540">
    <property type="entry name" value="P-loop containing nucleoside triphosphate hydrolases"/>
    <property type="match status" value="1"/>
</dbReference>
<dbReference type="PROSITE" id="PS01266">
    <property type="entry name" value="ADENYLOSUCCIN_SYN_1"/>
    <property type="match status" value="1"/>
</dbReference>
<dbReference type="PROSITE" id="PS00513">
    <property type="entry name" value="ADENYLOSUCCIN_SYN_2"/>
    <property type="match status" value="1"/>
</dbReference>
<accession>B5RLY1</accession>